<organism>
    <name type="scientific">Escherichia coli O81 (strain ED1a)</name>
    <dbReference type="NCBI Taxonomy" id="585397"/>
    <lineage>
        <taxon>Bacteria</taxon>
        <taxon>Pseudomonadati</taxon>
        <taxon>Pseudomonadota</taxon>
        <taxon>Gammaproteobacteria</taxon>
        <taxon>Enterobacterales</taxon>
        <taxon>Enterobacteriaceae</taxon>
        <taxon>Escherichia</taxon>
    </lineage>
</organism>
<name>FABA_ECO81</name>
<proteinExistence type="inferred from homology"/>
<keyword id="KW-0963">Cytoplasm</keyword>
<keyword id="KW-0275">Fatty acid biosynthesis</keyword>
<keyword id="KW-0276">Fatty acid metabolism</keyword>
<keyword id="KW-0413">Isomerase</keyword>
<keyword id="KW-0444">Lipid biosynthesis</keyword>
<keyword id="KW-0443">Lipid metabolism</keyword>
<keyword id="KW-0456">Lyase</keyword>
<dbReference type="EC" id="4.2.1.59" evidence="1"/>
<dbReference type="EC" id="5.3.3.14" evidence="1"/>
<dbReference type="EMBL" id="CU928162">
    <property type="protein sequence ID" value="CAR07179.1"/>
    <property type="molecule type" value="Genomic_DNA"/>
</dbReference>
<dbReference type="RefSeq" id="WP_000227926.1">
    <property type="nucleotide sequence ID" value="NC_011745.1"/>
</dbReference>
<dbReference type="SMR" id="B7MS65"/>
<dbReference type="GeneID" id="93245035"/>
<dbReference type="KEGG" id="ecq:ECED1_0977"/>
<dbReference type="HOGENOM" id="CLU_097925_0_0_6"/>
<dbReference type="UniPathway" id="UPA00094"/>
<dbReference type="Proteomes" id="UP000000748">
    <property type="component" value="Chromosome"/>
</dbReference>
<dbReference type="GO" id="GO:0005737">
    <property type="term" value="C:cytoplasm"/>
    <property type="evidence" value="ECO:0007669"/>
    <property type="project" value="UniProtKB-SubCell"/>
</dbReference>
<dbReference type="GO" id="GO:0019171">
    <property type="term" value="F:(3R)-hydroxyacyl-[acyl-carrier-protein] dehydratase activity"/>
    <property type="evidence" value="ECO:0007669"/>
    <property type="project" value="UniProtKB-UniRule"/>
</dbReference>
<dbReference type="GO" id="GO:0034017">
    <property type="term" value="F:trans-2-decenoyl-acyl-carrier-protein isomerase activity"/>
    <property type="evidence" value="ECO:0007669"/>
    <property type="project" value="UniProtKB-UniRule"/>
</dbReference>
<dbReference type="GO" id="GO:0006636">
    <property type="term" value="P:unsaturated fatty acid biosynthetic process"/>
    <property type="evidence" value="ECO:0007669"/>
    <property type="project" value="UniProtKB-UniRule"/>
</dbReference>
<dbReference type="CDD" id="cd01287">
    <property type="entry name" value="FabA"/>
    <property type="match status" value="1"/>
</dbReference>
<dbReference type="FunFam" id="3.10.129.10:FF:000003">
    <property type="entry name" value="3-hydroxydecanoyl-[acyl-carrier-protein] dehydratase"/>
    <property type="match status" value="1"/>
</dbReference>
<dbReference type="Gene3D" id="3.10.129.10">
    <property type="entry name" value="Hotdog Thioesterase"/>
    <property type="match status" value="1"/>
</dbReference>
<dbReference type="HAMAP" id="MF_00405">
    <property type="entry name" value="FabA"/>
    <property type="match status" value="1"/>
</dbReference>
<dbReference type="InterPro" id="IPR010083">
    <property type="entry name" value="FabA"/>
</dbReference>
<dbReference type="InterPro" id="IPR013114">
    <property type="entry name" value="FabA_FabZ"/>
</dbReference>
<dbReference type="InterPro" id="IPR029069">
    <property type="entry name" value="HotDog_dom_sf"/>
</dbReference>
<dbReference type="NCBIfam" id="TIGR01749">
    <property type="entry name" value="fabA"/>
    <property type="match status" value="1"/>
</dbReference>
<dbReference type="NCBIfam" id="NF003509">
    <property type="entry name" value="PRK05174.1"/>
    <property type="match status" value="1"/>
</dbReference>
<dbReference type="PANTHER" id="PTHR30272">
    <property type="entry name" value="3-HYDROXYACYL-[ACYL-CARRIER-PROTEIN] DEHYDRATASE"/>
    <property type="match status" value="1"/>
</dbReference>
<dbReference type="PANTHER" id="PTHR30272:SF8">
    <property type="entry name" value="3-HYDROXYDECANOYL-[ACYL-CARRIER-PROTEIN] DEHYDRATASE"/>
    <property type="match status" value="1"/>
</dbReference>
<dbReference type="Pfam" id="PF07977">
    <property type="entry name" value="FabA"/>
    <property type="match status" value="1"/>
</dbReference>
<dbReference type="SUPFAM" id="SSF54637">
    <property type="entry name" value="Thioesterase/thiol ester dehydrase-isomerase"/>
    <property type="match status" value="1"/>
</dbReference>
<evidence type="ECO:0000255" key="1">
    <source>
        <dbReference type="HAMAP-Rule" id="MF_00405"/>
    </source>
</evidence>
<protein>
    <recommendedName>
        <fullName evidence="1">3-hydroxydecanoyl-[acyl-carrier-protein] dehydratase</fullName>
        <ecNumber evidence="1">4.2.1.59</ecNumber>
    </recommendedName>
    <alternativeName>
        <fullName evidence="1">3-hydroxyacyl-[acyl-carrier-protein] dehydratase FabA</fullName>
    </alternativeName>
    <alternativeName>
        <fullName evidence="1">Beta-hydroxydecanoyl thioester dehydrase</fullName>
    </alternativeName>
    <alternativeName>
        <fullName evidence="1">Trans-2-decenoyl-[acyl-carrier-protein] isomerase</fullName>
        <ecNumber evidence="1">5.3.3.14</ecNumber>
    </alternativeName>
</protein>
<accession>B7MS65</accession>
<gene>
    <name evidence="1" type="primary">fabA</name>
    <name type="ordered locus">ECED1_0977</name>
</gene>
<comment type="function">
    <text evidence="1">Necessary for the introduction of cis unsaturation into fatty acids. Catalyzes the dehydration of (3R)-3-hydroxydecanoyl-ACP to E-(2)-decenoyl-ACP and then its isomerization to Z-(3)-decenoyl-ACP. Can catalyze the dehydratase reaction for beta-hydroxyacyl-ACPs with saturated chain lengths up to 16:0, being most active on intermediate chain length.</text>
</comment>
<comment type="catalytic activity">
    <reaction evidence="1">
        <text>a (3R)-hydroxyacyl-[ACP] = a (2E)-enoyl-[ACP] + H2O</text>
        <dbReference type="Rhea" id="RHEA:13097"/>
        <dbReference type="Rhea" id="RHEA-COMP:9925"/>
        <dbReference type="Rhea" id="RHEA-COMP:9945"/>
        <dbReference type="ChEBI" id="CHEBI:15377"/>
        <dbReference type="ChEBI" id="CHEBI:78784"/>
        <dbReference type="ChEBI" id="CHEBI:78827"/>
        <dbReference type="EC" id="4.2.1.59"/>
    </reaction>
</comment>
<comment type="catalytic activity">
    <reaction evidence="1">
        <text>(3R)-hydroxydecanoyl-[ACP] = (2E)-decenoyl-[ACP] + H2O</text>
        <dbReference type="Rhea" id="RHEA:41860"/>
        <dbReference type="Rhea" id="RHEA-COMP:9638"/>
        <dbReference type="Rhea" id="RHEA-COMP:9639"/>
        <dbReference type="ChEBI" id="CHEBI:15377"/>
        <dbReference type="ChEBI" id="CHEBI:78466"/>
        <dbReference type="ChEBI" id="CHEBI:78467"/>
    </reaction>
</comment>
<comment type="catalytic activity">
    <reaction evidence="1">
        <text>(2E)-decenoyl-[ACP] = (3Z)-decenoyl-[ACP]</text>
        <dbReference type="Rhea" id="RHEA:23568"/>
        <dbReference type="Rhea" id="RHEA-COMP:9639"/>
        <dbReference type="Rhea" id="RHEA-COMP:9927"/>
        <dbReference type="ChEBI" id="CHEBI:78467"/>
        <dbReference type="ChEBI" id="CHEBI:78798"/>
        <dbReference type="EC" id="5.3.3.14"/>
    </reaction>
</comment>
<comment type="pathway">
    <text evidence="1">Lipid metabolism; fatty acid biosynthesis.</text>
</comment>
<comment type="subunit">
    <text evidence="1">Homodimer.</text>
</comment>
<comment type="subcellular location">
    <subcellularLocation>
        <location evidence="1">Cytoplasm</location>
    </subcellularLocation>
</comment>
<comment type="similarity">
    <text evidence="1">Belongs to the thioester dehydratase family. FabA subfamily.</text>
</comment>
<feature type="chain" id="PRO_1000201187" description="3-hydroxydecanoyl-[acyl-carrier-protein] dehydratase">
    <location>
        <begin position="1"/>
        <end position="172"/>
    </location>
</feature>
<feature type="active site" evidence="1">
    <location>
        <position position="71"/>
    </location>
</feature>
<reference key="1">
    <citation type="journal article" date="2009" name="PLoS Genet.">
        <title>Organised genome dynamics in the Escherichia coli species results in highly diverse adaptive paths.</title>
        <authorList>
            <person name="Touchon M."/>
            <person name="Hoede C."/>
            <person name="Tenaillon O."/>
            <person name="Barbe V."/>
            <person name="Baeriswyl S."/>
            <person name="Bidet P."/>
            <person name="Bingen E."/>
            <person name="Bonacorsi S."/>
            <person name="Bouchier C."/>
            <person name="Bouvet O."/>
            <person name="Calteau A."/>
            <person name="Chiapello H."/>
            <person name="Clermont O."/>
            <person name="Cruveiller S."/>
            <person name="Danchin A."/>
            <person name="Diard M."/>
            <person name="Dossat C."/>
            <person name="Karoui M.E."/>
            <person name="Frapy E."/>
            <person name="Garry L."/>
            <person name="Ghigo J.M."/>
            <person name="Gilles A.M."/>
            <person name="Johnson J."/>
            <person name="Le Bouguenec C."/>
            <person name="Lescat M."/>
            <person name="Mangenot S."/>
            <person name="Martinez-Jehanne V."/>
            <person name="Matic I."/>
            <person name="Nassif X."/>
            <person name="Oztas S."/>
            <person name="Petit M.A."/>
            <person name="Pichon C."/>
            <person name="Rouy Z."/>
            <person name="Ruf C.S."/>
            <person name="Schneider D."/>
            <person name="Tourret J."/>
            <person name="Vacherie B."/>
            <person name="Vallenet D."/>
            <person name="Medigue C."/>
            <person name="Rocha E.P.C."/>
            <person name="Denamur E."/>
        </authorList>
    </citation>
    <scope>NUCLEOTIDE SEQUENCE [LARGE SCALE GENOMIC DNA]</scope>
    <source>
        <strain>ED1a</strain>
    </source>
</reference>
<sequence>MVDKRESYTKEDLLASGRGELFGAKGPQLPAPNMLMMDRVVKMTETGGNFDKGYVEAELDINPDLWFFGCHFIGDPVMPGCLGLDAMWQLVGFYLGWLGGEGKGRALGVGEVKFTGQVLPTAKKVTYRIHFKRIVNRRLIMGLADGEVLVDGRLIYTANDLKVGLFQDTSAF</sequence>